<accession>Q9A6Z7</accession>
<name>LOLD2_CAUVC</name>
<protein>
    <recommendedName>
        <fullName evidence="1">Lipoprotein-releasing system ATP-binding protein LolD 2</fullName>
        <ecNumber evidence="1">7.6.2.-</ecNumber>
    </recommendedName>
</protein>
<keyword id="KW-0067">ATP-binding</keyword>
<keyword id="KW-0997">Cell inner membrane</keyword>
<keyword id="KW-1003">Cell membrane</keyword>
<keyword id="KW-0472">Membrane</keyword>
<keyword id="KW-0547">Nucleotide-binding</keyword>
<keyword id="KW-1185">Reference proteome</keyword>
<keyword id="KW-1278">Translocase</keyword>
<keyword id="KW-0813">Transport</keyword>
<organism>
    <name type="scientific">Caulobacter vibrioides (strain ATCC 19089 / CIP 103742 / CB 15)</name>
    <name type="common">Caulobacter crescentus</name>
    <dbReference type="NCBI Taxonomy" id="190650"/>
    <lineage>
        <taxon>Bacteria</taxon>
        <taxon>Pseudomonadati</taxon>
        <taxon>Pseudomonadota</taxon>
        <taxon>Alphaproteobacteria</taxon>
        <taxon>Caulobacterales</taxon>
        <taxon>Caulobacteraceae</taxon>
        <taxon>Caulobacter</taxon>
    </lineage>
</organism>
<evidence type="ECO:0000255" key="1">
    <source>
        <dbReference type="HAMAP-Rule" id="MF_01708"/>
    </source>
</evidence>
<comment type="function">
    <text evidence="1">Part of the ABC transporter complex LolCDE involved in the translocation of mature outer membrane-directed lipoproteins, from the inner membrane to the periplasmic chaperone, LolA. Responsible for the formation of the LolA-lipoprotein complex in an ATP-dependent manner.</text>
</comment>
<comment type="subunit">
    <text evidence="1">The complex is composed of two ATP-binding proteins (LolD) and two transmembrane proteins (LolC and LolE).</text>
</comment>
<comment type="subcellular location">
    <subcellularLocation>
        <location evidence="1">Cell inner membrane</location>
        <topology evidence="1">Peripheral membrane protein</topology>
    </subcellularLocation>
</comment>
<comment type="similarity">
    <text evidence="1">Belongs to the ABC transporter superfamily. Lipoprotein translocase (TC 3.A.1.125) family.</text>
</comment>
<reference key="1">
    <citation type="journal article" date="2001" name="Proc. Natl. Acad. Sci. U.S.A.">
        <title>Complete genome sequence of Caulobacter crescentus.</title>
        <authorList>
            <person name="Nierman W.C."/>
            <person name="Feldblyum T.V."/>
            <person name="Laub M.T."/>
            <person name="Paulsen I.T."/>
            <person name="Nelson K.E."/>
            <person name="Eisen J.A."/>
            <person name="Heidelberg J.F."/>
            <person name="Alley M.R.K."/>
            <person name="Ohta N."/>
            <person name="Maddock J.R."/>
            <person name="Potocka I."/>
            <person name="Nelson W.C."/>
            <person name="Newton A."/>
            <person name="Stephens C."/>
            <person name="Phadke N.D."/>
            <person name="Ely B."/>
            <person name="DeBoy R.T."/>
            <person name="Dodson R.J."/>
            <person name="Durkin A.S."/>
            <person name="Gwinn M.L."/>
            <person name="Haft D.H."/>
            <person name="Kolonay J.F."/>
            <person name="Smit J."/>
            <person name="Craven M.B."/>
            <person name="Khouri H.M."/>
            <person name="Shetty J."/>
            <person name="Berry K.J."/>
            <person name="Utterback T.R."/>
            <person name="Tran K."/>
            <person name="Wolf A.M."/>
            <person name="Vamathevan J.J."/>
            <person name="Ermolaeva M.D."/>
            <person name="White O."/>
            <person name="Salzberg S.L."/>
            <person name="Venter J.C."/>
            <person name="Shapiro L."/>
            <person name="Fraser C.M."/>
        </authorList>
    </citation>
    <scope>NUCLEOTIDE SEQUENCE [LARGE SCALE GENOMIC DNA]</scope>
    <source>
        <strain>ATCC 19089 / CIP 103742 / CB 15</strain>
    </source>
</reference>
<proteinExistence type="inferred from homology"/>
<sequence length="228" mass="24715">MSDPVLALRGLERVYKTEAGDLPVLRGVDLDVYPGEVVGLIGPSGSGKSSLLHSAGLLERPDAGLVALEGRDCSKLSERARTRIRLGTVGFVYQFHHLLPEFSALENVAMPLTIAGKSRREAEARARELLESLGLGHRLNHQPAQMSGGEQQRVAIARALANRPKLLLADEPTGNLDPATSTAVFQALYQVCREQGVAAVIATHNMELARYMDRVVALKDGHLELQRV</sequence>
<feature type="chain" id="PRO_0000092429" description="Lipoprotein-releasing system ATP-binding protein LolD 2">
    <location>
        <begin position="1"/>
        <end position="228"/>
    </location>
</feature>
<feature type="domain" description="ABC transporter" evidence="1">
    <location>
        <begin position="9"/>
        <end position="228"/>
    </location>
</feature>
<feature type="binding site" evidence="1">
    <location>
        <begin position="42"/>
        <end position="49"/>
    </location>
    <ligand>
        <name>ATP</name>
        <dbReference type="ChEBI" id="CHEBI:30616"/>
    </ligand>
</feature>
<dbReference type="EC" id="7.6.2.-" evidence="1"/>
<dbReference type="EMBL" id="AE005673">
    <property type="protein sequence ID" value="AAK23904.1"/>
    <property type="molecule type" value="Genomic_DNA"/>
</dbReference>
<dbReference type="PIR" id="D87488">
    <property type="entry name" value="D87488"/>
</dbReference>
<dbReference type="RefSeq" id="NP_420736.1">
    <property type="nucleotide sequence ID" value="NC_002696.2"/>
</dbReference>
<dbReference type="RefSeq" id="WP_010919795.1">
    <property type="nucleotide sequence ID" value="NC_002696.2"/>
</dbReference>
<dbReference type="SMR" id="Q9A6Z7"/>
<dbReference type="STRING" id="190650.CC_1929"/>
<dbReference type="EnsemblBacteria" id="AAK23904">
    <property type="protein sequence ID" value="AAK23904"/>
    <property type="gene ID" value="CC_1929"/>
</dbReference>
<dbReference type="KEGG" id="ccr:CC_1929"/>
<dbReference type="PATRIC" id="fig|190650.5.peg.1946"/>
<dbReference type="eggNOG" id="COG1136">
    <property type="taxonomic scope" value="Bacteria"/>
</dbReference>
<dbReference type="HOGENOM" id="CLU_000604_1_22_5"/>
<dbReference type="BioCyc" id="CAULO:CC1929-MONOMER"/>
<dbReference type="Proteomes" id="UP000001816">
    <property type="component" value="Chromosome"/>
</dbReference>
<dbReference type="GO" id="GO:0005886">
    <property type="term" value="C:plasma membrane"/>
    <property type="evidence" value="ECO:0007669"/>
    <property type="project" value="UniProtKB-SubCell"/>
</dbReference>
<dbReference type="GO" id="GO:0005524">
    <property type="term" value="F:ATP binding"/>
    <property type="evidence" value="ECO:0007669"/>
    <property type="project" value="UniProtKB-KW"/>
</dbReference>
<dbReference type="GO" id="GO:0016887">
    <property type="term" value="F:ATP hydrolysis activity"/>
    <property type="evidence" value="ECO:0007669"/>
    <property type="project" value="InterPro"/>
</dbReference>
<dbReference type="GO" id="GO:0022857">
    <property type="term" value="F:transmembrane transporter activity"/>
    <property type="evidence" value="ECO:0007669"/>
    <property type="project" value="TreeGrafter"/>
</dbReference>
<dbReference type="GO" id="GO:0044874">
    <property type="term" value="P:lipoprotein localization to outer membrane"/>
    <property type="evidence" value="ECO:0007669"/>
    <property type="project" value="TreeGrafter"/>
</dbReference>
<dbReference type="GO" id="GO:0089705">
    <property type="term" value="P:protein localization to outer membrane"/>
    <property type="evidence" value="ECO:0007669"/>
    <property type="project" value="TreeGrafter"/>
</dbReference>
<dbReference type="CDD" id="cd03255">
    <property type="entry name" value="ABC_MJ0796_LolCDE_FtsE"/>
    <property type="match status" value="1"/>
</dbReference>
<dbReference type="FunFam" id="3.40.50.300:FF:000032">
    <property type="entry name" value="Export ABC transporter ATP-binding protein"/>
    <property type="match status" value="1"/>
</dbReference>
<dbReference type="Gene3D" id="3.40.50.300">
    <property type="entry name" value="P-loop containing nucleotide triphosphate hydrolases"/>
    <property type="match status" value="1"/>
</dbReference>
<dbReference type="InterPro" id="IPR003593">
    <property type="entry name" value="AAA+_ATPase"/>
</dbReference>
<dbReference type="InterPro" id="IPR003439">
    <property type="entry name" value="ABC_transporter-like_ATP-bd"/>
</dbReference>
<dbReference type="InterPro" id="IPR017871">
    <property type="entry name" value="ABC_transporter-like_CS"/>
</dbReference>
<dbReference type="InterPro" id="IPR015854">
    <property type="entry name" value="ABC_transpr_LolD-like"/>
</dbReference>
<dbReference type="InterPro" id="IPR017911">
    <property type="entry name" value="MacB-like_ATP-bd"/>
</dbReference>
<dbReference type="InterPro" id="IPR027417">
    <property type="entry name" value="P-loop_NTPase"/>
</dbReference>
<dbReference type="PANTHER" id="PTHR24220">
    <property type="entry name" value="IMPORT ATP-BINDING PROTEIN"/>
    <property type="match status" value="1"/>
</dbReference>
<dbReference type="PANTHER" id="PTHR24220:SF689">
    <property type="entry name" value="LIPOPROTEIN-RELEASING SYSTEM ATP-BINDING PROTEIN LOLD"/>
    <property type="match status" value="1"/>
</dbReference>
<dbReference type="Pfam" id="PF00005">
    <property type="entry name" value="ABC_tran"/>
    <property type="match status" value="1"/>
</dbReference>
<dbReference type="SMART" id="SM00382">
    <property type="entry name" value="AAA"/>
    <property type="match status" value="1"/>
</dbReference>
<dbReference type="SUPFAM" id="SSF52540">
    <property type="entry name" value="P-loop containing nucleoside triphosphate hydrolases"/>
    <property type="match status" value="1"/>
</dbReference>
<dbReference type="PROSITE" id="PS00211">
    <property type="entry name" value="ABC_TRANSPORTER_1"/>
    <property type="match status" value="1"/>
</dbReference>
<dbReference type="PROSITE" id="PS50893">
    <property type="entry name" value="ABC_TRANSPORTER_2"/>
    <property type="match status" value="1"/>
</dbReference>
<dbReference type="PROSITE" id="PS51244">
    <property type="entry name" value="LOLD"/>
    <property type="match status" value="1"/>
</dbReference>
<gene>
    <name evidence="1" type="primary">lolD2</name>
    <name type="ordered locus">CC_1929</name>
</gene>